<accession>Q3YRN4</accession>
<protein>
    <recommendedName>
        <fullName evidence="1">Phenylalanine--tRNA ligase beta subunit</fullName>
        <ecNumber evidence="1">6.1.1.20</ecNumber>
    </recommendedName>
    <alternativeName>
        <fullName evidence="1">Phenylalanyl-tRNA synthetase beta subunit</fullName>
        <shortName evidence="1">PheRS</shortName>
    </alternativeName>
</protein>
<name>SYFB_EHRCJ</name>
<comment type="catalytic activity">
    <reaction evidence="1">
        <text>tRNA(Phe) + L-phenylalanine + ATP = L-phenylalanyl-tRNA(Phe) + AMP + diphosphate + H(+)</text>
        <dbReference type="Rhea" id="RHEA:19413"/>
        <dbReference type="Rhea" id="RHEA-COMP:9668"/>
        <dbReference type="Rhea" id="RHEA-COMP:9699"/>
        <dbReference type="ChEBI" id="CHEBI:15378"/>
        <dbReference type="ChEBI" id="CHEBI:30616"/>
        <dbReference type="ChEBI" id="CHEBI:33019"/>
        <dbReference type="ChEBI" id="CHEBI:58095"/>
        <dbReference type="ChEBI" id="CHEBI:78442"/>
        <dbReference type="ChEBI" id="CHEBI:78531"/>
        <dbReference type="ChEBI" id="CHEBI:456215"/>
        <dbReference type="EC" id="6.1.1.20"/>
    </reaction>
</comment>
<comment type="cofactor">
    <cofactor evidence="1">
        <name>Mg(2+)</name>
        <dbReference type="ChEBI" id="CHEBI:18420"/>
    </cofactor>
    <text evidence="1">Binds 2 magnesium ions per tetramer.</text>
</comment>
<comment type="subunit">
    <text evidence="1">Tetramer of two alpha and two beta subunits.</text>
</comment>
<comment type="subcellular location">
    <subcellularLocation>
        <location evidence="1">Cytoplasm</location>
    </subcellularLocation>
</comment>
<comment type="similarity">
    <text evidence="1">Belongs to the phenylalanyl-tRNA synthetase beta subunit family. Type 1 subfamily.</text>
</comment>
<organism>
    <name type="scientific">Ehrlichia canis (strain Jake)</name>
    <dbReference type="NCBI Taxonomy" id="269484"/>
    <lineage>
        <taxon>Bacteria</taxon>
        <taxon>Pseudomonadati</taxon>
        <taxon>Pseudomonadota</taxon>
        <taxon>Alphaproteobacteria</taxon>
        <taxon>Rickettsiales</taxon>
        <taxon>Anaplasmataceae</taxon>
        <taxon>Ehrlichia</taxon>
    </lineage>
</organism>
<feature type="chain" id="PRO_0000232061" description="Phenylalanine--tRNA ligase beta subunit">
    <location>
        <begin position="1"/>
        <end position="785"/>
    </location>
</feature>
<feature type="domain" description="tRNA-binding" evidence="1">
    <location>
        <begin position="38"/>
        <end position="150"/>
    </location>
</feature>
<feature type="domain" description="B5" evidence="1">
    <location>
        <begin position="394"/>
        <end position="470"/>
    </location>
</feature>
<feature type="domain" description="FDX-ACB" evidence="1">
    <location>
        <begin position="690"/>
        <end position="783"/>
    </location>
</feature>
<feature type="binding site" evidence="1">
    <location>
        <position position="448"/>
    </location>
    <ligand>
        <name>Mg(2+)</name>
        <dbReference type="ChEBI" id="CHEBI:18420"/>
        <note>shared with alpha subunit</note>
    </ligand>
</feature>
<feature type="binding site" evidence="1">
    <location>
        <position position="454"/>
    </location>
    <ligand>
        <name>Mg(2+)</name>
        <dbReference type="ChEBI" id="CHEBI:18420"/>
        <note>shared with alpha subunit</note>
    </ligand>
</feature>
<feature type="binding site" evidence="1">
    <location>
        <position position="457"/>
    </location>
    <ligand>
        <name>Mg(2+)</name>
        <dbReference type="ChEBI" id="CHEBI:18420"/>
        <note>shared with alpha subunit</note>
    </ligand>
</feature>
<feature type="binding site" evidence="1">
    <location>
        <position position="458"/>
    </location>
    <ligand>
        <name>Mg(2+)</name>
        <dbReference type="ChEBI" id="CHEBI:18420"/>
        <note>shared with alpha subunit</note>
    </ligand>
</feature>
<keyword id="KW-0030">Aminoacyl-tRNA synthetase</keyword>
<keyword id="KW-0067">ATP-binding</keyword>
<keyword id="KW-0963">Cytoplasm</keyword>
<keyword id="KW-0436">Ligase</keyword>
<keyword id="KW-0460">Magnesium</keyword>
<keyword id="KW-0479">Metal-binding</keyword>
<keyword id="KW-0547">Nucleotide-binding</keyword>
<keyword id="KW-0648">Protein biosynthesis</keyword>
<keyword id="KW-0694">RNA-binding</keyword>
<keyword id="KW-0820">tRNA-binding</keyword>
<evidence type="ECO:0000255" key="1">
    <source>
        <dbReference type="HAMAP-Rule" id="MF_00283"/>
    </source>
</evidence>
<dbReference type="EC" id="6.1.1.20" evidence="1"/>
<dbReference type="EMBL" id="CP000107">
    <property type="protein sequence ID" value="AAZ68621.1"/>
    <property type="molecule type" value="Genomic_DNA"/>
</dbReference>
<dbReference type="RefSeq" id="WP_011304699.1">
    <property type="nucleotide sequence ID" value="NC_007354.1"/>
</dbReference>
<dbReference type="SMR" id="Q3YRN4"/>
<dbReference type="FunCoup" id="Q3YRN4">
    <property type="interactions" value="295"/>
</dbReference>
<dbReference type="STRING" id="269484.Ecaj_0587"/>
<dbReference type="KEGG" id="ecn:Ecaj_0587"/>
<dbReference type="eggNOG" id="COG0072">
    <property type="taxonomic scope" value="Bacteria"/>
</dbReference>
<dbReference type="eggNOG" id="COG0073">
    <property type="taxonomic scope" value="Bacteria"/>
</dbReference>
<dbReference type="HOGENOM" id="CLU_016891_0_0_5"/>
<dbReference type="InParanoid" id="Q3YRN4"/>
<dbReference type="Proteomes" id="UP000000435">
    <property type="component" value="Chromosome"/>
</dbReference>
<dbReference type="GO" id="GO:0009328">
    <property type="term" value="C:phenylalanine-tRNA ligase complex"/>
    <property type="evidence" value="ECO:0007669"/>
    <property type="project" value="TreeGrafter"/>
</dbReference>
<dbReference type="GO" id="GO:0005524">
    <property type="term" value="F:ATP binding"/>
    <property type="evidence" value="ECO:0007669"/>
    <property type="project" value="UniProtKB-UniRule"/>
</dbReference>
<dbReference type="GO" id="GO:0000287">
    <property type="term" value="F:magnesium ion binding"/>
    <property type="evidence" value="ECO:0007669"/>
    <property type="project" value="UniProtKB-UniRule"/>
</dbReference>
<dbReference type="GO" id="GO:0004826">
    <property type="term" value="F:phenylalanine-tRNA ligase activity"/>
    <property type="evidence" value="ECO:0007669"/>
    <property type="project" value="UniProtKB-UniRule"/>
</dbReference>
<dbReference type="GO" id="GO:0000049">
    <property type="term" value="F:tRNA binding"/>
    <property type="evidence" value="ECO:0007669"/>
    <property type="project" value="UniProtKB-KW"/>
</dbReference>
<dbReference type="GO" id="GO:0006432">
    <property type="term" value="P:phenylalanyl-tRNA aminoacylation"/>
    <property type="evidence" value="ECO:0007669"/>
    <property type="project" value="UniProtKB-UniRule"/>
</dbReference>
<dbReference type="CDD" id="cd00769">
    <property type="entry name" value="PheRS_beta_core"/>
    <property type="match status" value="1"/>
</dbReference>
<dbReference type="CDD" id="cd02796">
    <property type="entry name" value="tRNA_bind_bactPheRS"/>
    <property type="match status" value="1"/>
</dbReference>
<dbReference type="Gene3D" id="3.30.56.10">
    <property type="match status" value="2"/>
</dbReference>
<dbReference type="Gene3D" id="3.30.930.10">
    <property type="entry name" value="Bira Bifunctional Protein, Domain 2"/>
    <property type="match status" value="1"/>
</dbReference>
<dbReference type="Gene3D" id="3.30.70.380">
    <property type="entry name" value="Ferrodoxin-fold anticodon-binding domain"/>
    <property type="match status" value="1"/>
</dbReference>
<dbReference type="Gene3D" id="2.40.50.140">
    <property type="entry name" value="Nucleic acid-binding proteins"/>
    <property type="match status" value="1"/>
</dbReference>
<dbReference type="Gene3D" id="3.50.40.10">
    <property type="entry name" value="Phenylalanyl-trna Synthetase, Chain B, domain 3"/>
    <property type="match status" value="1"/>
</dbReference>
<dbReference type="HAMAP" id="MF_00283">
    <property type="entry name" value="Phe_tRNA_synth_beta1"/>
    <property type="match status" value="1"/>
</dbReference>
<dbReference type="InterPro" id="IPR045864">
    <property type="entry name" value="aa-tRNA-synth_II/BPL/LPL"/>
</dbReference>
<dbReference type="InterPro" id="IPR005146">
    <property type="entry name" value="B3/B4_tRNA-bd"/>
</dbReference>
<dbReference type="InterPro" id="IPR009061">
    <property type="entry name" value="DNA-bd_dom_put_sf"/>
</dbReference>
<dbReference type="InterPro" id="IPR005121">
    <property type="entry name" value="Fdx_antiC-bd"/>
</dbReference>
<dbReference type="InterPro" id="IPR036690">
    <property type="entry name" value="Fdx_antiC-bd_sf"/>
</dbReference>
<dbReference type="InterPro" id="IPR012340">
    <property type="entry name" value="NA-bd_OB-fold"/>
</dbReference>
<dbReference type="InterPro" id="IPR045060">
    <property type="entry name" value="Phe-tRNA-ligase_IIc_bsu"/>
</dbReference>
<dbReference type="InterPro" id="IPR004532">
    <property type="entry name" value="Phe-tRNA-ligase_IIc_bsu_bact"/>
</dbReference>
<dbReference type="InterPro" id="IPR020825">
    <property type="entry name" value="Phe-tRNA_synthase-like_B3/B4"/>
</dbReference>
<dbReference type="InterPro" id="IPR041616">
    <property type="entry name" value="PheRS_beta_core"/>
</dbReference>
<dbReference type="InterPro" id="IPR002547">
    <property type="entry name" value="tRNA-bd_dom"/>
</dbReference>
<dbReference type="InterPro" id="IPR033714">
    <property type="entry name" value="tRNA_bind_bactPheRS"/>
</dbReference>
<dbReference type="InterPro" id="IPR005147">
    <property type="entry name" value="tRNA_synthase_B5-dom"/>
</dbReference>
<dbReference type="NCBIfam" id="TIGR00472">
    <property type="entry name" value="pheT_bact"/>
    <property type="match status" value="1"/>
</dbReference>
<dbReference type="NCBIfam" id="NF045760">
    <property type="entry name" value="YtpR"/>
    <property type="match status" value="1"/>
</dbReference>
<dbReference type="PANTHER" id="PTHR10947:SF0">
    <property type="entry name" value="PHENYLALANINE--TRNA LIGASE BETA SUBUNIT"/>
    <property type="match status" value="1"/>
</dbReference>
<dbReference type="PANTHER" id="PTHR10947">
    <property type="entry name" value="PHENYLALANYL-TRNA SYNTHETASE BETA CHAIN AND LEUCINE-RICH REPEAT-CONTAINING PROTEIN 47"/>
    <property type="match status" value="1"/>
</dbReference>
<dbReference type="Pfam" id="PF03483">
    <property type="entry name" value="B3_4"/>
    <property type="match status" value="1"/>
</dbReference>
<dbReference type="Pfam" id="PF03484">
    <property type="entry name" value="B5"/>
    <property type="match status" value="1"/>
</dbReference>
<dbReference type="Pfam" id="PF03147">
    <property type="entry name" value="FDX-ACB"/>
    <property type="match status" value="1"/>
</dbReference>
<dbReference type="Pfam" id="PF01588">
    <property type="entry name" value="tRNA_bind"/>
    <property type="match status" value="1"/>
</dbReference>
<dbReference type="Pfam" id="PF17759">
    <property type="entry name" value="tRNA_synthFbeta"/>
    <property type="match status" value="1"/>
</dbReference>
<dbReference type="SMART" id="SM00873">
    <property type="entry name" value="B3_4"/>
    <property type="match status" value="1"/>
</dbReference>
<dbReference type="SMART" id="SM00874">
    <property type="entry name" value="B5"/>
    <property type="match status" value="1"/>
</dbReference>
<dbReference type="SMART" id="SM00896">
    <property type="entry name" value="FDX-ACB"/>
    <property type="match status" value="1"/>
</dbReference>
<dbReference type="SUPFAM" id="SSF54991">
    <property type="entry name" value="Anticodon-binding domain of PheRS"/>
    <property type="match status" value="1"/>
</dbReference>
<dbReference type="SUPFAM" id="SSF55681">
    <property type="entry name" value="Class II aaRS and biotin synthetases"/>
    <property type="match status" value="1"/>
</dbReference>
<dbReference type="SUPFAM" id="SSF50249">
    <property type="entry name" value="Nucleic acid-binding proteins"/>
    <property type="match status" value="1"/>
</dbReference>
<dbReference type="SUPFAM" id="SSF56037">
    <property type="entry name" value="PheT/TilS domain"/>
    <property type="match status" value="1"/>
</dbReference>
<dbReference type="SUPFAM" id="SSF46955">
    <property type="entry name" value="Putative DNA-binding domain"/>
    <property type="match status" value="1"/>
</dbReference>
<dbReference type="PROSITE" id="PS51483">
    <property type="entry name" value="B5"/>
    <property type="match status" value="1"/>
</dbReference>
<dbReference type="PROSITE" id="PS51447">
    <property type="entry name" value="FDX_ACB"/>
    <property type="match status" value="1"/>
</dbReference>
<dbReference type="PROSITE" id="PS50886">
    <property type="entry name" value="TRBD"/>
    <property type="match status" value="1"/>
</dbReference>
<proteinExistence type="inferred from homology"/>
<gene>
    <name evidence="1" type="primary">pheT</name>
    <name type="ordered locus">Ecaj_0587</name>
</gene>
<reference key="1">
    <citation type="journal article" date="2006" name="J. Bacteriol.">
        <title>The genome of the obligately intracellular bacterium Ehrlichia canis reveals themes of complex membrane structure and immune evasion strategies.</title>
        <authorList>
            <person name="Mavromatis K."/>
            <person name="Doyle C.K."/>
            <person name="Lykidis A."/>
            <person name="Ivanova N."/>
            <person name="Francino M.P."/>
            <person name="Chain P."/>
            <person name="Shin M."/>
            <person name="Malfatti S."/>
            <person name="Larimer F."/>
            <person name="Copeland A."/>
            <person name="Detter J.C."/>
            <person name="Land M."/>
            <person name="Richardson P.M."/>
            <person name="Yu X.J."/>
            <person name="Walker D.H."/>
            <person name="McBride J.W."/>
            <person name="Kyrpides N.C."/>
        </authorList>
    </citation>
    <scope>NUCLEOTIDE SEQUENCE [LARGE SCALE GENOMIC DNA]</scope>
    <source>
        <strain>Jake</strain>
    </source>
</reference>
<sequence length="785" mass="88101">MKFTFSWLRRYLDTDVSLDVIIKKLSDIGIEVNNVDYCEHLKTFVIAEVLEVNPHHSANKLKICKVSDGKQILQVVCGASNVKVGMKSVLACVGSIMPTDQSIIEVVKLRGVESYGMLCSNDELGIVDHRNSKNGIIELPNTYNVGDTFFPCDPIIEVSITPNRGDCLGVYGIARDLAAAGLGKLKCIGELSNHSNCSSPIEVSVQVDGIVKGRYIKGIKNCESPKWLKDYLLVCGINSISFVVDITNYIMLSFNRPLHVYDANKIKNKLIFKKADNQTEFYALNDKKYILGTENIVAVDLENSIHSVAGVIGSKLSSCLLDTEDIFLESAWFAPVDIVLSSKKIKLSTDSSYRFERFVDPRFLQTGLDLATKMILEYCGGTHFDVVSNEVHVVDNIELNFFPDSVRSIGNVNISNEEIFDFLIKLGFIVDNNNEFLWRVTVPSWRSDIKHSSDIVEEVLRLYGYDKICEEPIPISHVDISDDYHDRLKALLLSEGLMEVITWSFTNMVFAEKLGYSSELLLIDNPISDKLNLMRPSLLLNLLQVVYENQAYGSSEIAIFEIGQVYGFNNICGSNSNVVCGVRYGNNLPRNLYKCDRSVDVFDVKSDVISILQELNIESNSIELRKSDKSYLHPVRSADVYFKDICLGYFGELHPNIVHLYEIKRPVVCFEVFLYKIPKVDVAHKELTESCYQSVKRDFAFLIDKDTSVQHLIDVTKNSNPVLIDNVTVFDLYEGNSIGDNKLSVALSVTFNPVDHTLNDQEIKDASDLIINAVAEKLGGVLRSF</sequence>